<gene>
    <name type="primary">PHF14</name>
    <name type="synonym">KIAA0783</name>
</gene>
<protein>
    <recommendedName>
        <fullName>PHD finger protein 14</fullName>
    </recommendedName>
</protein>
<dbReference type="EMBL" id="AB018326">
    <property type="protein sequence ID" value="BAA34503.2"/>
    <property type="status" value="ALT_INIT"/>
    <property type="molecule type" value="mRNA"/>
</dbReference>
<dbReference type="EMBL" id="AK295461">
    <property type="protein sequence ID" value="BAG58394.1"/>
    <property type="molecule type" value="mRNA"/>
</dbReference>
<dbReference type="EMBL" id="AC005007">
    <property type="status" value="NOT_ANNOTATED_CDS"/>
    <property type="molecule type" value="Genomic_DNA"/>
</dbReference>
<dbReference type="EMBL" id="AC007029">
    <property type="status" value="NOT_ANNOTATED_CDS"/>
    <property type="molecule type" value="Genomic_DNA"/>
</dbReference>
<dbReference type="EMBL" id="AC080064">
    <property type="status" value="NOT_ANNOTATED_CDS"/>
    <property type="molecule type" value="Genomic_DNA"/>
</dbReference>
<dbReference type="EMBL" id="AC104089">
    <property type="status" value="NOT_ANNOTATED_CDS"/>
    <property type="molecule type" value="Genomic_DNA"/>
</dbReference>
<dbReference type="EMBL" id="KF458374">
    <property type="status" value="NOT_ANNOTATED_CDS"/>
    <property type="molecule type" value="Genomic_DNA"/>
</dbReference>
<dbReference type="EMBL" id="CH471073">
    <property type="protein sequence ID" value="EAW93634.1"/>
    <property type="molecule type" value="Genomic_DNA"/>
</dbReference>
<dbReference type="EMBL" id="BC152414">
    <property type="protein sequence ID" value="AAI52415.1"/>
    <property type="molecule type" value="mRNA"/>
</dbReference>
<dbReference type="CCDS" id="CCDS47542.1">
    <molecule id="O94880-1"/>
</dbReference>
<dbReference type="RefSeq" id="NP_001007158.1">
    <molecule id="O94880-3"/>
    <property type="nucleotide sequence ID" value="NM_001007157.2"/>
</dbReference>
<dbReference type="RefSeq" id="NP_055475.2">
    <molecule id="O94880-1"/>
    <property type="nucleotide sequence ID" value="NM_014660.3"/>
</dbReference>
<dbReference type="RefSeq" id="XP_016868303.1">
    <property type="nucleotide sequence ID" value="XM_017012814.1"/>
</dbReference>
<dbReference type="SMR" id="O94880"/>
<dbReference type="BioGRID" id="115032">
    <property type="interactions" value="108"/>
</dbReference>
<dbReference type="FunCoup" id="O94880">
    <property type="interactions" value="2990"/>
</dbReference>
<dbReference type="IntAct" id="O94880">
    <property type="interactions" value="50"/>
</dbReference>
<dbReference type="MINT" id="O94880"/>
<dbReference type="STRING" id="9606.ENSP00000385795"/>
<dbReference type="GlyCosmos" id="O94880">
    <property type="glycosylation" value="1 site, 1 glycan"/>
</dbReference>
<dbReference type="GlyGen" id="O94880">
    <property type="glycosylation" value="1 site, 1 O-linked glycan (1 site)"/>
</dbReference>
<dbReference type="iPTMnet" id="O94880"/>
<dbReference type="PhosphoSitePlus" id="O94880"/>
<dbReference type="SwissPalm" id="O94880"/>
<dbReference type="BioMuta" id="PHF14"/>
<dbReference type="jPOST" id="O94880"/>
<dbReference type="MassIVE" id="O94880"/>
<dbReference type="PaxDb" id="9606-ENSP00000385795"/>
<dbReference type="PeptideAtlas" id="O94880"/>
<dbReference type="ProteomicsDB" id="50520">
    <molecule id="O94880-1"/>
</dbReference>
<dbReference type="ProteomicsDB" id="50521">
    <molecule id="O94880-2"/>
</dbReference>
<dbReference type="Pumba" id="O94880"/>
<dbReference type="Antibodypedia" id="629">
    <property type="antibodies" value="88 antibodies from 24 providers"/>
</dbReference>
<dbReference type="DNASU" id="9678"/>
<dbReference type="Ensembl" id="ENST00000403050.7">
    <molecule id="O94880-1"/>
    <property type="protein sequence ID" value="ENSP00000385795.3"/>
    <property type="gene ID" value="ENSG00000106443.17"/>
</dbReference>
<dbReference type="Ensembl" id="ENST00000634607.2">
    <molecule id="O94880-3"/>
    <property type="protein sequence ID" value="ENSP00000489535.1"/>
    <property type="gene ID" value="ENSG00000106443.17"/>
</dbReference>
<dbReference type="GeneID" id="9678"/>
<dbReference type="KEGG" id="hsa:9678"/>
<dbReference type="MANE-Select" id="ENST00000634607.2">
    <property type="protein sequence ID" value="ENSP00000489535.1"/>
    <property type="RefSeq nucleotide sequence ID" value="NM_001007157.2"/>
    <property type="RefSeq protein sequence ID" value="NP_001007158.1"/>
</dbReference>
<dbReference type="UCSC" id="uc003sry.3">
    <molecule id="O94880-3"/>
    <property type="organism name" value="human"/>
</dbReference>
<dbReference type="AGR" id="HGNC:22203"/>
<dbReference type="CTD" id="9678"/>
<dbReference type="DisGeNET" id="9678"/>
<dbReference type="GeneCards" id="PHF14"/>
<dbReference type="HGNC" id="HGNC:22203">
    <property type="gene designation" value="PHF14"/>
</dbReference>
<dbReference type="HPA" id="ENSG00000106443">
    <property type="expression patterns" value="Low tissue specificity"/>
</dbReference>
<dbReference type="MIM" id="619907">
    <property type="type" value="gene"/>
</dbReference>
<dbReference type="neXtProt" id="NX_O94880"/>
<dbReference type="OpenTargets" id="ENSG00000106443"/>
<dbReference type="PharmGKB" id="PA134867397"/>
<dbReference type="VEuPathDB" id="HostDB:ENSG00000106443"/>
<dbReference type="eggNOG" id="KOG0957">
    <property type="taxonomic scope" value="Eukaryota"/>
</dbReference>
<dbReference type="GeneTree" id="ENSGT00940000156923"/>
<dbReference type="HOGENOM" id="CLU_006506_0_0_1"/>
<dbReference type="InParanoid" id="O94880"/>
<dbReference type="OMA" id="KCGVAVH"/>
<dbReference type="OrthoDB" id="336088at2759"/>
<dbReference type="PAN-GO" id="O94880">
    <property type="GO annotations" value="2 GO annotations based on evolutionary models"/>
</dbReference>
<dbReference type="PhylomeDB" id="O94880"/>
<dbReference type="TreeFam" id="TF316118"/>
<dbReference type="PathwayCommons" id="O94880"/>
<dbReference type="SignaLink" id="O94880"/>
<dbReference type="BioGRID-ORCS" id="9678">
    <property type="hits" value="12 hits in 1160 CRISPR screens"/>
</dbReference>
<dbReference type="ChiTaRS" id="PHF14">
    <property type="organism name" value="human"/>
</dbReference>
<dbReference type="GenomeRNAi" id="9678"/>
<dbReference type="Pharos" id="O94880">
    <property type="development level" value="Tbio"/>
</dbReference>
<dbReference type="PRO" id="PR:O94880"/>
<dbReference type="Proteomes" id="UP000005640">
    <property type="component" value="Chromosome 7"/>
</dbReference>
<dbReference type="RNAct" id="O94880">
    <property type="molecule type" value="protein"/>
</dbReference>
<dbReference type="Bgee" id="ENSG00000106443">
    <property type="expression patterns" value="Expressed in sural nerve and 186 other cell types or tissues"/>
</dbReference>
<dbReference type="ExpressionAtlas" id="O94880">
    <property type="expression patterns" value="baseline and differential"/>
</dbReference>
<dbReference type="GO" id="GO:0000785">
    <property type="term" value="C:chromatin"/>
    <property type="evidence" value="ECO:0000314"/>
    <property type="project" value="UniProtKB"/>
</dbReference>
<dbReference type="GO" id="GO:0005694">
    <property type="term" value="C:chromosome"/>
    <property type="evidence" value="ECO:0007669"/>
    <property type="project" value="UniProtKB-SubCell"/>
</dbReference>
<dbReference type="GO" id="GO:0005737">
    <property type="term" value="C:cytoplasm"/>
    <property type="evidence" value="ECO:0000314"/>
    <property type="project" value="UniProtKB"/>
</dbReference>
<dbReference type="GO" id="GO:0005634">
    <property type="term" value="C:nucleus"/>
    <property type="evidence" value="ECO:0000314"/>
    <property type="project" value="UniProtKB"/>
</dbReference>
<dbReference type="GO" id="GO:0042393">
    <property type="term" value="F:histone binding"/>
    <property type="evidence" value="ECO:0000314"/>
    <property type="project" value="UniProtKB"/>
</dbReference>
<dbReference type="GO" id="GO:0140566">
    <property type="term" value="F:histone reader activity"/>
    <property type="evidence" value="ECO:0000250"/>
    <property type="project" value="UniProtKB"/>
</dbReference>
<dbReference type="GO" id="GO:0008270">
    <property type="term" value="F:zinc ion binding"/>
    <property type="evidence" value="ECO:0000250"/>
    <property type="project" value="UniProtKB"/>
</dbReference>
<dbReference type="GO" id="GO:0002314">
    <property type="term" value="P:germinal center B cell differentiation"/>
    <property type="evidence" value="ECO:0000250"/>
    <property type="project" value="UniProtKB"/>
</dbReference>
<dbReference type="GO" id="GO:0048286">
    <property type="term" value="P:lung alveolus development"/>
    <property type="evidence" value="ECO:0000250"/>
    <property type="project" value="UniProtKB"/>
</dbReference>
<dbReference type="GO" id="GO:0010463">
    <property type="term" value="P:mesenchymal cell proliferation"/>
    <property type="evidence" value="ECO:0000250"/>
    <property type="project" value="UniProtKB"/>
</dbReference>
<dbReference type="GO" id="GO:0060916">
    <property type="term" value="P:mesenchymal cell proliferation involved in lung development"/>
    <property type="evidence" value="ECO:0000250"/>
    <property type="project" value="UniProtKB"/>
</dbReference>
<dbReference type="GO" id="GO:0008285">
    <property type="term" value="P:negative regulation of cell population proliferation"/>
    <property type="evidence" value="ECO:0000250"/>
    <property type="project" value="UniProtKB"/>
</dbReference>
<dbReference type="GO" id="GO:0072201">
    <property type="term" value="P:negative regulation of mesenchymal cell proliferation"/>
    <property type="evidence" value="ECO:0000250"/>
    <property type="project" value="UniProtKB"/>
</dbReference>
<dbReference type="GO" id="GO:2000791">
    <property type="term" value="P:negative regulation of mesenchymal cell proliferation involved in lung development"/>
    <property type="evidence" value="ECO:0000250"/>
    <property type="project" value="UniProtKB"/>
</dbReference>
<dbReference type="GO" id="GO:2000584">
    <property type="term" value="P:negative regulation of platelet-derived growth factor receptor-alpha signaling pathway"/>
    <property type="evidence" value="ECO:0000250"/>
    <property type="project" value="UniProtKB"/>
</dbReference>
<dbReference type="GO" id="GO:0000122">
    <property type="term" value="P:negative regulation of transcription by RNA polymerase II"/>
    <property type="evidence" value="ECO:0000250"/>
    <property type="project" value="UniProtKB"/>
</dbReference>
<dbReference type="CDD" id="cd15674">
    <property type="entry name" value="ePHD_PHF14"/>
    <property type="match status" value="1"/>
</dbReference>
<dbReference type="CDD" id="cd15561">
    <property type="entry name" value="PHD1_PHF14"/>
    <property type="match status" value="1"/>
</dbReference>
<dbReference type="CDD" id="cd15562">
    <property type="entry name" value="PHD2_PHF14"/>
    <property type="match status" value="1"/>
</dbReference>
<dbReference type="CDD" id="cd15563">
    <property type="entry name" value="PHD3_PHF14"/>
    <property type="match status" value="1"/>
</dbReference>
<dbReference type="FunFam" id="2.30.30.1150:FF:000002">
    <property type="entry name" value="PHD finger protein 14 isoform X1"/>
    <property type="match status" value="1"/>
</dbReference>
<dbReference type="FunFam" id="3.30.40.10:FF:000059">
    <property type="entry name" value="PHD finger protein 14 isoform X1"/>
    <property type="match status" value="1"/>
</dbReference>
<dbReference type="FunFam" id="3.30.40.10:FF:000086">
    <property type="entry name" value="PHD finger protein 14 isoform X1"/>
    <property type="match status" value="1"/>
</dbReference>
<dbReference type="Gene3D" id="2.30.30.1150">
    <property type="match status" value="2"/>
</dbReference>
<dbReference type="Gene3D" id="3.30.40.10">
    <property type="entry name" value="Zinc/RING finger domain, C3HC4 (zinc finger)"/>
    <property type="match status" value="2"/>
</dbReference>
<dbReference type="InterPro" id="IPR034732">
    <property type="entry name" value="EPHD"/>
</dbReference>
<dbReference type="InterPro" id="IPR050701">
    <property type="entry name" value="Histone_Mod_Regulator"/>
</dbReference>
<dbReference type="InterPro" id="IPR019786">
    <property type="entry name" value="Zinc_finger_PHD-type_CS"/>
</dbReference>
<dbReference type="InterPro" id="IPR011011">
    <property type="entry name" value="Znf_FYVE_PHD"/>
</dbReference>
<dbReference type="InterPro" id="IPR001965">
    <property type="entry name" value="Znf_PHD"/>
</dbReference>
<dbReference type="InterPro" id="IPR019787">
    <property type="entry name" value="Znf_PHD-finger"/>
</dbReference>
<dbReference type="InterPro" id="IPR013083">
    <property type="entry name" value="Znf_RING/FYVE/PHD"/>
</dbReference>
<dbReference type="PANTHER" id="PTHR13793:SF150">
    <property type="entry name" value="PHD FINGER PROTEIN 14"/>
    <property type="match status" value="1"/>
</dbReference>
<dbReference type="PANTHER" id="PTHR13793">
    <property type="entry name" value="PHD FINGER PROTEINS"/>
    <property type="match status" value="1"/>
</dbReference>
<dbReference type="Pfam" id="PF00628">
    <property type="entry name" value="PHD"/>
    <property type="match status" value="2"/>
</dbReference>
<dbReference type="Pfam" id="PF13831">
    <property type="entry name" value="PHD_2"/>
    <property type="match status" value="1"/>
</dbReference>
<dbReference type="Pfam" id="PF13832">
    <property type="entry name" value="zf-HC5HC2H_2"/>
    <property type="match status" value="1"/>
</dbReference>
<dbReference type="SMART" id="SM00249">
    <property type="entry name" value="PHD"/>
    <property type="match status" value="4"/>
</dbReference>
<dbReference type="SUPFAM" id="SSF57903">
    <property type="entry name" value="FYVE/PHD zinc finger"/>
    <property type="match status" value="3"/>
</dbReference>
<dbReference type="PROSITE" id="PS51805">
    <property type="entry name" value="EPHD"/>
    <property type="match status" value="1"/>
</dbReference>
<dbReference type="PROSITE" id="PS01359">
    <property type="entry name" value="ZF_PHD_1"/>
    <property type="match status" value="3"/>
</dbReference>
<dbReference type="PROSITE" id="PS50016">
    <property type="entry name" value="ZF_PHD_2"/>
    <property type="match status" value="3"/>
</dbReference>
<organism>
    <name type="scientific">Homo sapiens</name>
    <name type="common">Human</name>
    <dbReference type="NCBI Taxonomy" id="9606"/>
    <lineage>
        <taxon>Eukaryota</taxon>
        <taxon>Metazoa</taxon>
        <taxon>Chordata</taxon>
        <taxon>Craniata</taxon>
        <taxon>Vertebrata</taxon>
        <taxon>Euteleostomi</taxon>
        <taxon>Mammalia</taxon>
        <taxon>Eutheria</taxon>
        <taxon>Euarchontoglires</taxon>
        <taxon>Primates</taxon>
        <taxon>Haplorrhini</taxon>
        <taxon>Catarrhini</taxon>
        <taxon>Hominidae</taxon>
        <taxon>Homo</taxon>
    </lineage>
</organism>
<evidence type="ECO:0000250" key="1">
    <source>
        <dbReference type="UniProtKB" id="A0A286Y9D1"/>
    </source>
</evidence>
<evidence type="ECO:0000250" key="2">
    <source>
        <dbReference type="UniProtKB" id="Q9D4H9"/>
    </source>
</evidence>
<evidence type="ECO:0000255" key="3"/>
<evidence type="ECO:0000255" key="4">
    <source>
        <dbReference type="PROSITE-ProRule" id="PRU00146"/>
    </source>
</evidence>
<evidence type="ECO:0000255" key="5">
    <source>
        <dbReference type="PROSITE-ProRule" id="PRU01146"/>
    </source>
</evidence>
<evidence type="ECO:0000256" key="6">
    <source>
        <dbReference type="SAM" id="MobiDB-lite"/>
    </source>
</evidence>
<evidence type="ECO:0000269" key="7">
    <source>
    </source>
</evidence>
<evidence type="ECO:0000269" key="8">
    <source>
    </source>
</evidence>
<evidence type="ECO:0000303" key="9">
    <source>
    </source>
</evidence>
<evidence type="ECO:0000305" key="10"/>
<evidence type="ECO:0007744" key="11">
    <source>
    </source>
</evidence>
<evidence type="ECO:0007744" key="12">
    <source>
    </source>
</evidence>
<evidence type="ECO:0007744" key="13">
    <source>
    </source>
</evidence>
<evidence type="ECO:0007744" key="14">
    <source>
    </source>
</evidence>
<evidence type="ECO:0007744" key="15">
    <source>
    </source>
</evidence>
<evidence type="ECO:0007744" key="16">
    <source>
    </source>
</evidence>
<evidence type="ECO:0007744" key="17">
    <source>
    </source>
</evidence>
<evidence type="ECO:0007744" key="18">
    <source>
    </source>
</evidence>
<proteinExistence type="evidence at protein level"/>
<feature type="chain" id="PRO_0000059306" description="PHD finger protein 14">
    <location>
        <begin position="1"/>
        <end position="948"/>
    </location>
</feature>
<feature type="zinc finger region" description="PHD-type 1" evidence="4">
    <location>
        <begin position="319"/>
        <end position="380"/>
    </location>
</feature>
<feature type="zinc finger region" description="C2HC pre-PHD-type" evidence="5">
    <location>
        <begin position="382"/>
        <end position="415"/>
    </location>
</feature>
<feature type="zinc finger region" description="PHD-type 2" evidence="5">
    <location>
        <begin position="439"/>
        <end position="499"/>
    </location>
</feature>
<feature type="zinc finger region" description="PHD-type 3" evidence="4">
    <location>
        <begin position="725"/>
        <end position="779"/>
    </location>
</feature>
<feature type="zinc finger region" description="PHD-type 4" evidence="4">
    <location>
        <begin position="868"/>
        <end position="921"/>
    </location>
</feature>
<feature type="region of interest" description="Disordered" evidence="6">
    <location>
        <begin position="22"/>
        <end position="302"/>
    </location>
</feature>
<feature type="region of interest" description="Disordered" evidence="6">
    <location>
        <begin position="811"/>
        <end position="862"/>
    </location>
</feature>
<feature type="region of interest" description="Disordered" evidence="6">
    <location>
        <begin position="920"/>
        <end position="948"/>
    </location>
</feature>
<feature type="coiled-coil region" evidence="3">
    <location>
        <begin position="630"/>
        <end position="678"/>
    </location>
</feature>
<feature type="compositionally biased region" description="Low complexity" evidence="6">
    <location>
        <begin position="36"/>
        <end position="47"/>
    </location>
</feature>
<feature type="compositionally biased region" description="Acidic residues" evidence="6">
    <location>
        <begin position="60"/>
        <end position="71"/>
    </location>
</feature>
<feature type="compositionally biased region" description="Basic and acidic residues" evidence="6">
    <location>
        <begin position="72"/>
        <end position="85"/>
    </location>
</feature>
<feature type="compositionally biased region" description="Basic and acidic residues" evidence="6">
    <location>
        <begin position="95"/>
        <end position="110"/>
    </location>
</feature>
<feature type="compositionally biased region" description="Basic and acidic residues" evidence="6">
    <location>
        <begin position="117"/>
        <end position="139"/>
    </location>
</feature>
<feature type="compositionally biased region" description="Low complexity" evidence="6">
    <location>
        <begin position="140"/>
        <end position="174"/>
    </location>
</feature>
<feature type="compositionally biased region" description="Acidic residues" evidence="6">
    <location>
        <begin position="199"/>
        <end position="212"/>
    </location>
</feature>
<feature type="compositionally biased region" description="Acidic residues" evidence="6">
    <location>
        <begin position="233"/>
        <end position="256"/>
    </location>
</feature>
<feature type="compositionally biased region" description="Polar residues" evidence="6">
    <location>
        <begin position="288"/>
        <end position="297"/>
    </location>
</feature>
<feature type="compositionally biased region" description="Basic and acidic residues" evidence="6">
    <location>
        <begin position="836"/>
        <end position="850"/>
    </location>
</feature>
<feature type="compositionally biased region" description="Basic and acidic residues" evidence="6">
    <location>
        <begin position="922"/>
        <end position="935"/>
    </location>
</feature>
<feature type="compositionally biased region" description="Polar residues" evidence="6">
    <location>
        <begin position="936"/>
        <end position="948"/>
    </location>
</feature>
<feature type="binding site" evidence="4">
    <location>
        <position position="322"/>
    </location>
    <ligand>
        <name>Zn(2+)</name>
        <dbReference type="ChEBI" id="CHEBI:29105"/>
        <label>1</label>
    </ligand>
</feature>
<feature type="binding site" evidence="4">
    <location>
        <position position="325"/>
    </location>
    <ligand>
        <name>Zn(2+)</name>
        <dbReference type="ChEBI" id="CHEBI:29105"/>
        <label>1</label>
    </ligand>
</feature>
<feature type="binding site" evidence="4">
    <location>
        <position position="339"/>
    </location>
    <ligand>
        <name>Zn(2+)</name>
        <dbReference type="ChEBI" id="CHEBI:29105"/>
        <label>2</label>
    </ligand>
</feature>
<feature type="binding site" evidence="4">
    <location>
        <position position="342"/>
    </location>
    <ligand>
        <name>Zn(2+)</name>
        <dbReference type="ChEBI" id="CHEBI:29105"/>
        <label>2</label>
    </ligand>
</feature>
<feature type="binding site" evidence="4">
    <location>
        <position position="347"/>
    </location>
    <ligand>
        <name>Zn(2+)</name>
        <dbReference type="ChEBI" id="CHEBI:29105"/>
        <label>1</label>
    </ligand>
</feature>
<feature type="binding site" evidence="4">
    <location>
        <position position="350"/>
    </location>
    <ligand>
        <name>Zn(2+)</name>
        <dbReference type="ChEBI" id="CHEBI:29105"/>
        <label>1</label>
    </ligand>
</feature>
<feature type="binding site" evidence="4">
    <location>
        <position position="374"/>
    </location>
    <ligand>
        <name>Zn(2+)</name>
        <dbReference type="ChEBI" id="CHEBI:29105"/>
        <label>2</label>
    </ligand>
</feature>
<feature type="binding site" evidence="4">
    <location>
        <position position="377"/>
    </location>
    <ligand>
        <name>Zn(2+)</name>
        <dbReference type="ChEBI" id="CHEBI:29105"/>
        <label>2</label>
    </ligand>
</feature>
<feature type="binding site" evidence="1">
    <location>
        <position position="385"/>
    </location>
    <ligand>
        <name>Zn(2+)</name>
        <dbReference type="ChEBI" id="CHEBI:29105"/>
        <label>3</label>
    </ligand>
</feature>
<feature type="binding site" evidence="1">
    <location>
        <position position="388"/>
    </location>
    <ligand>
        <name>Zn(2+)</name>
        <dbReference type="ChEBI" id="CHEBI:29105"/>
        <label>3</label>
    </ligand>
</feature>
<feature type="binding site" evidence="1">
    <location>
        <position position="405"/>
    </location>
    <ligand>
        <name>Zn(2+)</name>
        <dbReference type="ChEBI" id="CHEBI:29105"/>
        <label>3</label>
    </ligand>
</feature>
<feature type="binding site" evidence="1">
    <location>
        <position position="408"/>
    </location>
    <ligand>
        <name>Zn(2+)</name>
        <dbReference type="ChEBI" id="CHEBI:29105"/>
        <label>3</label>
    </ligand>
</feature>
<feature type="binding site" evidence="1">
    <location>
        <position position="441"/>
    </location>
    <ligand>
        <name>Zn(2+)</name>
        <dbReference type="ChEBI" id="CHEBI:29105"/>
        <label>4</label>
    </ligand>
</feature>
<feature type="binding site" evidence="1">
    <location>
        <position position="444"/>
    </location>
    <ligand>
        <name>Zn(2+)</name>
        <dbReference type="ChEBI" id="CHEBI:29105"/>
        <label>4</label>
    </ligand>
</feature>
<feature type="binding site" evidence="1">
    <location>
        <position position="458"/>
    </location>
    <ligand>
        <name>Zn(2+)</name>
        <dbReference type="ChEBI" id="CHEBI:29105"/>
        <label>5</label>
    </ligand>
</feature>
<feature type="binding site" evidence="1">
    <location>
        <position position="463"/>
    </location>
    <ligand>
        <name>Zn(2+)</name>
        <dbReference type="ChEBI" id="CHEBI:29105"/>
        <label>5</label>
    </ligand>
</feature>
<feature type="binding site" evidence="1">
    <location>
        <position position="468"/>
    </location>
    <ligand>
        <name>Zn(2+)</name>
        <dbReference type="ChEBI" id="CHEBI:29105"/>
        <label>4</label>
    </ligand>
</feature>
<feature type="binding site" evidence="1">
    <location>
        <position position="471"/>
    </location>
    <ligand>
        <name>Zn(2+)</name>
        <dbReference type="ChEBI" id="CHEBI:29105"/>
        <label>4</label>
    </ligand>
</feature>
<feature type="binding site" evidence="1">
    <location>
        <position position="495"/>
    </location>
    <ligand>
        <name>Zn(2+)</name>
        <dbReference type="ChEBI" id="CHEBI:29105"/>
        <label>5</label>
    </ligand>
</feature>
<feature type="binding site" evidence="1">
    <location>
        <position position="498"/>
    </location>
    <ligand>
        <name>Zn(2+)</name>
        <dbReference type="ChEBI" id="CHEBI:29105"/>
        <label>5</label>
    </ligand>
</feature>
<feature type="binding site" evidence="4">
    <location>
        <position position="728"/>
    </location>
    <ligand>
        <name>Zn(2+)</name>
        <dbReference type="ChEBI" id="CHEBI:29105"/>
        <label>6</label>
    </ligand>
</feature>
<feature type="binding site" evidence="4">
    <location>
        <position position="731"/>
    </location>
    <ligand>
        <name>Zn(2+)</name>
        <dbReference type="ChEBI" id="CHEBI:29105"/>
        <label>6</label>
    </ligand>
</feature>
<feature type="binding site" evidence="4">
    <location>
        <position position="743"/>
    </location>
    <ligand>
        <name>Zn(2+)</name>
        <dbReference type="ChEBI" id="CHEBI:29105"/>
        <label>7</label>
    </ligand>
</feature>
<feature type="binding site" evidence="4">
    <location>
        <position position="746"/>
    </location>
    <ligand>
        <name>Zn(2+)</name>
        <dbReference type="ChEBI" id="CHEBI:29105"/>
        <label>7</label>
    </ligand>
</feature>
<feature type="binding site" evidence="4">
    <location>
        <position position="751"/>
    </location>
    <ligand>
        <name>Zn(2+)</name>
        <dbReference type="ChEBI" id="CHEBI:29105"/>
        <label>6</label>
    </ligand>
</feature>
<feature type="binding site" evidence="4">
    <location>
        <position position="754"/>
    </location>
    <ligand>
        <name>Zn(2+)</name>
        <dbReference type="ChEBI" id="CHEBI:29105"/>
        <label>6</label>
    </ligand>
</feature>
<feature type="binding site" evidence="4">
    <location>
        <position position="773"/>
    </location>
    <ligand>
        <name>Zn(2+)</name>
        <dbReference type="ChEBI" id="CHEBI:29105"/>
        <label>7</label>
    </ligand>
</feature>
<feature type="binding site" evidence="4">
    <location>
        <position position="776"/>
    </location>
    <ligand>
        <name>Zn(2+)</name>
        <dbReference type="ChEBI" id="CHEBI:29105"/>
        <label>7</label>
    </ligand>
</feature>
<feature type="binding site" evidence="4">
    <location>
        <position position="871"/>
    </location>
    <ligand>
        <name>Zn(2+)</name>
        <dbReference type="ChEBI" id="CHEBI:29105"/>
        <label>8</label>
    </ligand>
</feature>
<feature type="binding site" evidence="4">
    <location>
        <position position="874"/>
    </location>
    <ligand>
        <name>Zn(2+)</name>
        <dbReference type="ChEBI" id="CHEBI:29105"/>
        <label>8</label>
    </ligand>
</feature>
<feature type="binding site" evidence="4">
    <location>
        <position position="886"/>
    </location>
    <ligand>
        <name>Zn(2+)</name>
        <dbReference type="ChEBI" id="CHEBI:29105"/>
        <label>9</label>
    </ligand>
</feature>
<feature type="binding site" evidence="4">
    <location>
        <position position="889"/>
    </location>
    <ligand>
        <name>Zn(2+)</name>
        <dbReference type="ChEBI" id="CHEBI:29105"/>
        <label>9</label>
    </ligand>
</feature>
<feature type="binding site" evidence="4">
    <location>
        <position position="894"/>
    </location>
    <ligand>
        <name>Zn(2+)</name>
        <dbReference type="ChEBI" id="CHEBI:29105"/>
        <label>8</label>
    </ligand>
</feature>
<feature type="binding site" evidence="4">
    <location>
        <position position="897"/>
    </location>
    <ligand>
        <name>Zn(2+)</name>
        <dbReference type="ChEBI" id="CHEBI:29105"/>
        <label>8</label>
    </ligand>
</feature>
<feature type="binding site" evidence="4">
    <location>
        <position position="915"/>
    </location>
    <ligand>
        <name>Zn(2+)</name>
        <dbReference type="ChEBI" id="CHEBI:29105"/>
        <label>9</label>
    </ligand>
</feature>
<feature type="binding site" evidence="4">
    <location>
        <position position="918"/>
    </location>
    <ligand>
        <name>Zn(2+)</name>
        <dbReference type="ChEBI" id="CHEBI:29105"/>
        <label>9</label>
    </ligand>
</feature>
<feature type="modified residue" description="Phosphoserine" evidence="15">
    <location>
        <position position="26"/>
    </location>
</feature>
<feature type="modified residue" description="Phosphoserine" evidence="11">
    <location>
        <position position="29"/>
    </location>
</feature>
<feature type="modified residue" description="Phosphoserine" evidence="15 16">
    <location>
        <position position="84"/>
    </location>
</feature>
<feature type="modified residue" description="Phosphoserine" evidence="14">
    <location>
        <position position="91"/>
    </location>
</feature>
<feature type="modified residue" description="Phosphoserine" evidence="15">
    <location>
        <position position="196"/>
    </location>
</feature>
<feature type="modified residue" description="Phosphotyrosine" evidence="17">
    <location>
        <position position="206"/>
    </location>
</feature>
<feature type="modified residue" description="Phosphoserine" evidence="12 17">
    <location>
        <position position="208"/>
    </location>
</feature>
<feature type="modified residue" description="Phosphothreonine" evidence="12 13 14 15 16">
    <location>
        <position position="287"/>
    </location>
</feature>
<feature type="modified residue" description="Phosphoserine" evidence="12 13 14 15 16">
    <location>
        <position position="290"/>
    </location>
</feature>
<feature type="modified residue" description="Phosphoserine" evidence="14 15 16">
    <location>
        <position position="294"/>
    </location>
</feature>
<feature type="modified residue" description="Phosphoserine" evidence="14 15 16">
    <location>
        <position position="298"/>
    </location>
</feature>
<feature type="modified residue" description="Phosphoserine" evidence="14 15 16">
    <location>
        <position position="302"/>
    </location>
</feature>
<feature type="modified residue" description="Phosphoserine" evidence="16">
    <location>
        <position position="308"/>
    </location>
</feature>
<feature type="modified residue" description="Phosphoserine" evidence="17">
    <location>
        <position position="359"/>
    </location>
</feature>
<feature type="modified residue" description="Phosphoserine" evidence="14 15 16">
    <location>
        <position position="530"/>
    </location>
</feature>
<feature type="modified residue" description="Phosphoserine" evidence="2">
    <location>
        <position position="781"/>
    </location>
</feature>
<feature type="modified residue" description="Phosphoserine" evidence="2">
    <location>
        <position position="782"/>
    </location>
</feature>
<feature type="modified residue" description="Phosphoserine" evidence="16">
    <location>
        <position position="835"/>
    </location>
</feature>
<feature type="splice variant" id="VSP_061645" description="In isoform 3.">
    <original>MDRSSKRRQVKPLAASLLEALDYDSSDDSDFKVGDASDSEGSGNGSEDASKDSGEGSCSDSEENILEEELNEDIKVKEEQLKNSAEEEVLSSEKQLIKMEKKEEEENGERPRKKKEKEKEKEKEKEKEKEREKEKEKATVSENVAASAAATTPATSPPAVNTSPSVPTTTTATEEQVSEPKKWNLRRNRPLLDFVSMEELNDMDDYDSEDDNDWRPTVVKRKGRSASQKEGSDGDNEDDEDEGSGSDEDENDEGNDEDHSSPASEGGCKKKKSKVLSRNSADDEELTNDSLTLSQSKSNE</original>
    <variation>MIVQMTVILKLEMPQ</variation>
    <location>
        <begin position="1"/>
        <end position="300"/>
    </location>
</feature>
<feature type="splice variant" id="VSP_061646" description="In isoform 2.">
    <original>CDE</original>
    <variation>YPS</variation>
    <location>
        <begin position="886"/>
        <end position="888"/>
    </location>
</feature>
<feature type="splice variant" id="VSP_061647" description="In isoform 2.">
    <location>
        <begin position="889"/>
        <end position="948"/>
    </location>
</feature>
<feature type="sequence variant" id="VAR_018480" description="In dbSNP:rs218966." evidence="8">
    <original>K</original>
    <variation>R</variation>
    <location>
        <position position="115"/>
    </location>
</feature>
<feature type="sequence conflict" description="In Ref. 2; BAG58394." evidence="10" ref="2">
    <original>F</original>
    <variation>S</variation>
    <location>
        <position position="395"/>
    </location>
</feature>
<feature type="modified residue" description="Phosphoserine" evidence="14">
    <location sequence="O94880-2">
        <position position="651"/>
    </location>
</feature>
<feature type="cross-link" description="Glycyl lysine isopeptide (Lys-Gly) (interchain with G-Cter in SUMO2)" evidence="18">
    <location sequence="O94880-2">
        <position position="648"/>
    </location>
</feature>
<keyword id="KW-0024">Alternative initiation</keyword>
<keyword id="KW-0025">Alternative splicing</keyword>
<keyword id="KW-0158">Chromosome</keyword>
<keyword id="KW-0175">Coiled coil</keyword>
<keyword id="KW-0963">Cytoplasm</keyword>
<keyword id="KW-1017">Isopeptide bond</keyword>
<keyword id="KW-0479">Metal-binding</keyword>
<keyword id="KW-0539">Nucleus</keyword>
<keyword id="KW-0597">Phosphoprotein</keyword>
<keyword id="KW-1267">Proteomics identification</keyword>
<keyword id="KW-1185">Reference proteome</keyword>
<keyword id="KW-0677">Repeat</keyword>
<keyword id="KW-0832">Ubl conjugation</keyword>
<keyword id="KW-0862">Zinc</keyword>
<keyword id="KW-0863">Zinc-finger</keyword>
<name>PHF14_HUMAN</name>
<reference key="1">
    <citation type="journal article" date="1998" name="DNA Res.">
        <title>Prediction of the coding sequences of unidentified human genes. XI. The complete sequences of 100 new cDNA clones from brain which code for large proteins in vitro.</title>
        <authorList>
            <person name="Nagase T."/>
            <person name="Ishikawa K."/>
            <person name="Suyama M."/>
            <person name="Kikuno R."/>
            <person name="Miyajima N."/>
            <person name="Tanaka A."/>
            <person name="Kotani H."/>
            <person name="Nomura N."/>
            <person name="Ohara O."/>
        </authorList>
    </citation>
    <scope>NUCLEOTIDE SEQUENCE [LARGE SCALE MRNA] (ISOFORM 2)</scope>
    <scope>VARIANT ARG-115</scope>
    <source>
        <tissue>Brain</tissue>
    </source>
</reference>
<reference key="2">
    <citation type="journal article" date="2004" name="Nat. Genet.">
        <title>Complete sequencing and characterization of 21,243 full-length human cDNAs.</title>
        <authorList>
            <person name="Ota T."/>
            <person name="Suzuki Y."/>
            <person name="Nishikawa T."/>
            <person name="Otsuki T."/>
            <person name="Sugiyama T."/>
            <person name="Irie R."/>
            <person name="Wakamatsu A."/>
            <person name="Hayashi K."/>
            <person name="Sato H."/>
            <person name="Nagai K."/>
            <person name="Kimura K."/>
            <person name="Makita H."/>
            <person name="Sekine M."/>
            <person name="Obayashi M."/>
            <person name="Nishi T."/>
            <person name="Shibahara T."/>
            <person name="Tanaka T."/>
            <person name="Ishii S."/>
            <person name="Yamamoto J."/>
            <person name="Saito K."/>
            <person name="Kawai Y."/>
            <person name="Isono Y."/>
            <person name="Nakamura Y."/>
            <person name="Nagahari K."/>
            <person name="Murakami K."/>
            <person name="Yasuda T."/>
            <person name="Iwayanagi T."/>
            <person name="Wagatsuma M."/>
            <person name="Shiratori A."/>
            <person name="Sudo H."/>
            <person name="Hosoiri T."/>
            <person name="Kaku Y."/>
            <person name="Kodaira H."/>
            <person name="Kondo H."/>
            <person name="Sugawara M."/>
            <person name="Takahashi M."/>
            <person name="Kanda K."/>
            <person name="Yokoi T."/>
            <person name="Furuya T."/>
            <person name="Kikkawa E."/>
            <person name="Omura Y."/>
            <person name="Abe K."/>
            <person name="Kamihara K."/>
            <person name="Katsuta N."/>
            <person name="Sato K."/>
            <person name="Tanikawa M."/>
            <person name="Yamazaki M."/>
            <person name="Ninomiya K."/>
            <person name="Ishibashi T."/>
            <person name="Yamashita H."/>
            <person name="Murakawa K."/>
            <person name="Fujimori K."/>
            <person name="Tanai H."/>
            <person name="Kimata M."/>
            <person name="Watanabe M."/>
            <person name="Hiraoka S."/>
            <person name="Chiba Y."/>
            <person name="Ishida S."/>
            <person name="Ono Y."/>
            <person name="Takiguchi S."/>
            <person name="Watanabe S."/>
            <person name="Yosida M."/>
            <person name="Hotuta T."/>
            <person name="Kusano J."/>
            <person name="Kanehori K."/>
            <person name="Takahashi-Fujii A."/>
            <person name="Hara H."/>
            <person name="Tanase T.-O."/>
            <person name="Nomura Y."/>
            <person name="Togiya S."/>
            <person name="Komai F."/>
            <person name="Hara R."/>
            <person name="Takeuchi K."/>
            <person name="Arita M."/>
            <person name="Imose N."/>
            <person name="Musashino K."/>
            <person name="Yuuki H."/>
            <person name="Oshima A."/>
            <person name="Sasaki N."/>
            <person name="Aotsuka S."/>
            <person name="Yoshikawa Y."/>
            <person name="Matsunawa H."/>
            <person name="Ichihara T."/>
            <person name="Shiohata N."/>
            <person name="Sano S."/>
            <person name="Moriya S."/>
            <person name="Momiyama H."/>
            <person name="Satoh N."/>
            <person name="Takami S."/>
            <person name="Terashima Y."/>
            <person name="Suzuki O."/>
            <person name="Nakagawa S."/>
            <person name="Senoh A."/>
            <person name="Mizoguchi H."/>
            <person name="Goto Y."/>
            <person name="Shimizu F."/>
            <person name="Wakebe H."/>
            <person name="Hishigaki H."/>
            <person name="Watanabe T."/>
            <person name="Sugiyama A."/>
            <person name="Takemoto M."/>
            <person name="Kawakami B."/>
            <person name="Yamazaki M."/>
            <person name="Watanabe K."/>
            <person name="Kumagai A."/>
            <person name="Itakura S."/>
            <person name="Fukuzumi Y."/>
            <person name="Fujimori Y."/>
            <person name="Komiyama M."/>
            <person name="Tashiro H."/>
            <person name="Tanigami A."/>
            <person name="Fujiwara T."/>
            <person name="Ono T."/>
            <person name="Yamada K."/>
            <person name="Fujii Y."/>
            <person name="Ozaki K."/>
            <person name="Hirao M."/>
            <person name="Ohmori Y."/>
            <person name="Kawabata A."/>
            <person name="Hikiji T."/>
            <person name="Kobatake N."/>
            <person name="Inagaki H."/>
            <person name="Ikema Y."/>
            <person name="Okamoto S."/>
            <person name="Okitani R."/>
            <person name="Kawakami T."/>
            <person name="Noguchi S."/>
            <person name="Itoh T."/>
            <person name="Shigeta K."/>
            <person name="Senba T."/>
            <person name="Matsumura K."/>
            <person name="Nakajima Y."/>
            <person name="Mizuno T."/>
            <person name="Morinaga M."/>
            <person name="Sasaki M."/>
            <person name="Togashi T."/>
            <person name="Oyama M."/>
            <person name="Hata H."/>
            <person name="Watanabe M."/>
            <person name="Komatsu T."/>
            <person name="Mizushima-Sugano J."/>
            <person name="Satoh T."/>
            <person name="Shirai Y."/>
            <person name="Takahashi Y."/>
            <person name="Nakagawa K."/>
            <person name="Okumura K."/>
            <person name="Nagase T."/>
            <person name="Nomura N."/>
            <person name="Kikuchi H."/>
            <person name="Masuho Y."/>
            <person name="Yamashita R."/>
            <person name="Nakai K."/>
            <person name="Yada T."/>
            <person name="Nakamura Y."/>
            <person name="Ohara O."/>
            <person name="Isogai T."/>
            <person name="Sugano S."/>
        </authorList>
    </citation>
    <scope>NUCLEOTIDE SEQUENCE [LARGE SCALE MRNA] (ISOFORM 3)</scope>
    <source>
        <tissue>Hippocampus</tissue>
    </source>
</reference>
<reference key="3">
    <citation type="journal article" date="2003" name="Nature">
        <title>The DNA sequence of human chromosome 7.</title>
        <authorList>
            <person name="Hillier L.W."/>
            <person name="Fulton R.S."/>
            <person name="Fulton L.A."/>
            <person name="Graves T.A."/>
            <person name="Pepin K.H."/>
            <person name="Wagner-McPherson C."/>
            <person name="Layman D."/>
            <person name="Maas J."/>
            <person name="Jaeger S."/>
            <person name="Walker R."/>
            <person name="Wylie K."/>
            <person name="Sekhon M."/>
            <person name="Becker M.C."/>
            <person name="O'Laughlin M.D."/>
            <person name="Schaller M.E."/>
            <person name="Fewell G.A."/>
            <person name="Delehaunty K.D."/>
            <person name="Miner T.L."/>
            <person name="Nash W.E."/>
            <person name="Cordes M."/>
            <person name="Du H."/>
            <person name="Sun H."/>
            <person name="Edwards J."/>
            <person name="Bradshaw-Cordum H."/>
            <person name="Ali J."/>
            <person name="Andrews S."/>
            <person name="Isak A."/>
            <person name="Vanbrunt A."/>
            <person name="Nguyen C."/>
            <person name="Du F."/>
            <person name="Lamar B."/>
            <person name="Courtney L."/>
            <person name="Kalicki J."/>
            <person name="Ozersky P."/>
            <person name="Bielicki L."/>
            <person name="Scott K."/>
            <person name="Holmes A."/>
            <person name="Harkins R."/>
            <person name="Harris A."/>
            <person name="Strong C.M."/>
            <person name="Hou S."/>
            <person name="Tomlinson C."/>
            <person name="Dauphin-Kohlberg S."/>
            <person name="Kozlowicz-Reilly A."/>
            <person name="Leonard S."/>
            <person name="Rohlfing T."/>
            <person name="Rock S.M."/>
            <person name="Tin-Wollam A.-M."/>
            <person name="Abbott A."/>
            <person name="Minx P."/>
            <person name="Maupin R."/>
            <person name="Strowmatt C."/>
            <person name="Latreille P."/>
            <person name="Miller N."/>
            <person name="Johnson D."/>
            <person name="Murray J."/>
            <person name="Woessner J.P."/>
            <person name="Wendl M.C."/>
            <person name="Yang S.-P."/>
            <person name="Schultz B.R."/>
            <person name="Wallis J.W."/>
            <person name="Spieth J."/>
            <person name="Bieri T.A."/>
            <person name="Nelson J.O."/>
            <person name="Berkowicz N."/>
            <person name="Wohldmann P.E."/>
            <person name="Cook L.L."/>
            <person name="Hickenbotham M.T."/>
            <person name="Eldred J."/>
            <person name="Williams D."/>
            <person name="Bedell J.A."/>
            <person name="Mardis E.R."/>
            <person name="Clifton S.W."/>
            <person name="Chissoe S.L."/>
            <person name="Marra M.A."/>
            <person name="Raymond C."/>
            <person name="Haugen E."/>
            <person name="Gillett W."/>
            <person name="Zhou Y."/>
            <person name="James R."/>
            <person name="Phelps K."/>
            <person name="Iadanoto S."/>
            <person name="Bubb K."/>
            <person name="Simms E."/>
            <person name="Levy R."/>
            <person name="Clendenning J."/>
            <person name="Kaul R."/>
            <person name="Kent W.J."/>
            <person name="Furey T.S."/>
            <person name="Baertsch R.A."/>
            <person name="Brent M.R."/>
            <person name="Keibler E."/>
            <person name="Flicek P."/>
            <person name="Bork P."/>
            <person name="Suyama M."/>
            <person name="Bailey J.A."/>
            <person name="Portnoy M.E."/>
            <person name="Torrents D."/>
            <person name="Chinwalla A.T."/>
            <person name="Gish W.R."/>
            <person name="Eddy S.R."/>
            <person name="McPherson J.D."/>
            <person name="Olson M.V."/>
            <person name="Eichler E.E."/>
            <person name="Green E.D."/>
            <person name="Waterston R.H."/>
            <person name="Wilson R.K."/>
        </authorList>
    </citation>
    <scope>NUCLEOTIDE SEQUENCE [LARGE SCALE GENOMIC DNA]</scope>
</reference>
<reference key="4">
    <citation type="submission" date="2005-07" db="EMBL/GenBank/DDBJ databases">
        <authorList>
            <person name="Mural R.J."/>
            <person name="Istrail S."/>
            <person name="Sutton G.G."/>
            <person name="Florea L."/>
            <person name="Halpern A.L."/>
            <person name="Mobarry C.M."/>
            <person name="Lippert R."/>
            <person name="Walenz B."/>
            <person name="Shatkay H."/>
            <person name="Dew I."/>
            <person name="Miller J.R."/>
            <person name="Flanigan M.J."/>
            <person name="Edwards N.J."/>
            <person name="Bolanos R."/>
            <person name="Fasulo D."/>
            <person name="Halldorsson B.V."/>
            <person name="Hannenhalli S."/>
            <person name="Turner R."/>
            <person name="Yooseph S."/>
            <person name="Lu F."/>
            <person name="Nusskern D.R."/>
            <person name="Shue B.C."/>
            <person name="Zheng X.H."/>
            <person name="Zhong F."/>
            <person name="Delcher A.L."/>
            <person name="Huson D.H."/>
            <person name="Kravitz S.A."/>
            <person name="Mouchard L."/>
            <person name="Reinert K."/>
            <person name="Remington K.A."/>
            <person name="Clark A.G."/>
            <person name="Waterman M.S."/>
            <person name="Eichler E.E."/>
            <person name="Adams M.D."/>
            <person name="Hunkapiller M.W."/>
            <person name="Myers E.W."/>
            <person name="Venter J.C."/>
        </authorList>
    </citation>
    <scope>NUCLEOTIDE SEQUENCE [LARGE SCALE GENOMIC DNA]</scope>
</reference>
<reference key="5">
    <citation type="journal article" date="2004" name="Genome Res.">
        <title>The status, quality, and expansion of the NIH full-length cDNA project: the Mammalian Gene Collection (MGC).</title>
        <authorList>
            <consortium name="The MGC Project Team"/>
        </authorList>
    </citation>
    <scope>NUCLEOTIDE SEQUENCE [LARGE SCALE MRNA] (ISOFORM 2)</scope>
</reference>
<reference key="6">
    <citation type="journal article" date="2006" name="Cell">
        <title>Global, in vivo, and site-specific phosphorylation dynamics in signaling networks.</title>
        <authorList>
            <person name="Olsen J.V."/>
            <person name="Blagoev B."/>
            <person name="Gnad F."/>
            <person name="Macek B."/>
            <person name="Kumar C."/>
            <person name="Mortensen P."/>
            <person name="Mann M."/>
        </authorList>
    </citation>
    <scope>PHOSPHORYLATION [LARGE SCALE ANALYSIS] AT SER-29</scope>
    <scope>IDENTIFICATION BY MASS SPECTROMETRY [LARGE SCALE ANALYSIS]</scope>
    <source>
        <tissue>Cervix carcinoma</tissue>
    </source>
</reference>
<reference key="7">
    <citation type="journal article" date="2008" name="Proc. Natl. Acad. Sci. U.S.A.">
        <title>A quantitative atlas of mitotic phosphorylation.</title>
        <authorList>
            <person name="Dephoure N."/>
            <person name="Zhou C."/>
            <person name="Villen J."/>
            <person name="Beausoleil S.A."/>
            <person name="Bakalarski C.E."/>
            <person name="Elledge S.J."/>
            <person name="Gygi S.P."/>
        </authorList>
    </citation>
    <scope>PHOSPHORYLATION [LARGE SCALE ANALYSIS] AT SER-208; THR-287 AND SER-290</scope>
    <scope>IDENTIFICATION BY MASS SPECTROMETRY [LARGE SCALE ANALYSIS]</scope>
    <source>
        <tissue>Cervix carcinoma</tissue>
    </source>
</reference>
<reference key="8">
    <citation type="journal article" date="2009" name="Anal. Chem.">
        <title>Lys-N and trypsin cover complementary parts of the phosphoproteome in a refined SCX-based approach.</title>
        <authorList>
            <person name="Gauci S."/>
            <person name="Helbig A.O."/>
            <person name="Slijper M."/>
            <person name="Krijgsveld J."/>
            <person name="Heck A.J."/>
            <person name="Mohammed S."/>
        </authorList>
    </citation>
    <scope>IDENTIFICATION BY MASS SPECTROMETRY [LARGE SCALE ANALYSIS]</scope>
</reference>
<reference key="9">
    <citation type="journal article" date="2009" name="Sci. Signal.">
        <title>Quantitative phosphoproteomic analysis of T cell receptor signaling reveals system-wide modulation of protein-protein interactions.</title>
        <authorList>
            <person name="Mayya V."/>
            <person name="Lundgren D.H."/>
            <person name="Hwang S.-I."/>
            <person name="Rezaul K."/>
            <person name="Wu L."/>
            <person name="Eng J.K."/>
            <person name="Rodionov V."/>
            <person name="Han D.K."/>
        </authorList>
    </citation>
    <scope>PHOSPHORYLATION [LARGE SCALE ANALYSIS] AT THR-287 AND SER-290</scope>
    <scope>IDENTIFICATION BY MASS SPECTROMETRY [LARGE SCALE ANALYSIS]</scope>
    <source>
        <tissue>Leukemic T-cell</tissue>
    </source>
</reference>
<reference key="10">
    <citation type="journal article" date="2010" name="Sci. Signal.">
        <title>Quantitative phosphoproteomics reveals widespread full phosphorylation site occupancy during mitosis.</title>
        <authorList>
            <person name="Olsen J.V."/>
            <person name="Vermeulen M."/>
            <person name="Santamaria A."/>
            <person name="Kumar C."/>
            <person name="Miller M.L."/>
            <person name="Jensen L.J."/>
            <person name="Gnad F."/>
            <person name="Cox J."/>
            <person name="Jensen T.S."/>
            <person name="Nigg E.A."/>
            <person name="Brunak S."/>
            <person name="Mann M."/>
        </authorList>
    </citation>
    <scope>PHOSPHORYLATION [LARGE SCALE ANALYSIS] AT SER-91; THR-287; SER-290; SER-294; SER-298; SER-302 AND SER-530</scope>
    <scope>PHOSPHORYLATION [LARGE SCALE ANALYSIS] AT SER-651 (ISOFORM 3)</scope>
    <scope>IDENTIFICATION BY MASS SPECTROMETRY [LARGE SCALE ANALYSIS]</scope>
    <source>
        <tissue>Cervix carcinoma</tissue>
    </source>
</reference>
<reference key="11">
    <citation type="journal article" date="2011" name="Sci. Signal.">
        <title>System-wide temporal characterization of the proteome and phosphoproteome of human embryonic stem cell differentiation.</title>
        <authorList>
            <person name="Rigbolt K.T."/>
            <person name="Prokhorova T.A."/>
            <person name="Akimov V."/>
            <person name="Henningsen J."/>
            <person name="Johansen P.T."/>
            <person name="Kratchmarova I."/>
            <person name="Kassem M."/>
            <person name="Mann M."/>
            <person name="Olsen J.V."/>
            <person name="Blagoev B."/>
        </authorList>
    </citation>
    <scope>PHOSPHORYLATION [LARGE SCALE ANALYSIS] AT SER-26; SER-84; SER-196; THR-287; SER-290; SER-294; SER-298; SER-302 AND SER-530</scope>
    <scope>IDENTIFICATION BY MASS SPECTROMETRY [LARGE SCALE ANALYSIS]</scope>
</reference>
<reference key="12">
    <citation type="journal article" date="2013" name="Acta Biochim. Biophys. Sin.">
        <title>Depletion of PHF14, a novel histone-binding protein gene, causes neonatal lethality in mice due to respiratory failure.</title>
        <authorList>
            <person name="Huang Q."/>
            <person name="Zhang L."/>
            <person name="Wang Y."/>
            <person name="Zhang C."/>
            <person name="Zhou S."/>
            <person name="Yang G."/>
            <person name="Li Z."/>
            <person name="Gao X."/>
            <person name="Chen Z."/>
            <person name="Zhang Z."/>
        </authorList>
    </citation>
    <scope>FUNCTION</scope>
    <scope>SUBCELLULAR LOCATION (ISOFORMS 1 AND 2)</scope>
    <scope>ALTERNATIVE SPLICING (ISOFORMS 1; 2 AND 3)</scope>
</reference>
<reference key="13">
    <citation type="journal article" date="2013" name="J. Proteome Res.">
        <title>Toward a comprehensive characterization of a human cancer cell phosphoproteome.</title>
        <authorList>
            <person name="Zhou H."/>
            <person name="Di Palma S."/>
            <person name="Preisinger C."/>
            <person name="Peng M."/>
            <person name="Polat A.N."/>
            <person name="Heck A.J."/>
            <person name="Mohammed S."/>
        </authorList>
    </citation>
    <scope>PHOSPHORYLATION [LARGE SCALE ANALYSIS] AT SER-84; THR-287; SER-290; SER-294; SER-298; SER-302; SER-308; SER-530 AND SER-835</scope>
    <scope>IDENTIFICATION BY MASS SPECTROMETRY [LARGE SCALE ANALYSIS]</scope>
    <source>
        <tissue>Cervix carcinoma</tissue>
        <tissue>Erythroleukemia</tissue>
    </source>
</reference>
<reference key="14">
    <citation type="journal article" date="2014" name="J. Proteomics">
        <title>An enzyme assisted RP-RPLC approach for in-depth analysis of human liver phosphoproteome.</title>
        <authorList>
            <person name="Bian Y."/>
            <person name="Song C."/>
            <person name="Cheng K."/>
            <person name="Dong M."/>
            <person name="Wang F."/>
            <person name="Huang J."/>
            <person name="Sun D."/>
            <person name="Wang L."/>
            <person name="Ye M."/>
            <person name="Zou H."/>
        </authorList>
    </citation>
    <scope>PHOSPHORYLATION [LARGE SCALE ANALYSIS] AT TYR-206; SER-208 AND SER-359</scope>
    <scope>IDENTIFICATION BY MASS SPECTROMETRY [LARGE SCALE ANALYSIS]</scope>
    <source>
        <tissue>Liver</tissue>
    </source>
</reference>
<reference key="15">
    <citation type="journal article" date="2017" name="Nat. Struct. Mol. Biol.">
        <title>Site-specific mapping of the human SUMO proteome reveals co-modification with phosphorylation.</title>
        <authorList>
            <person name="Hendriks I.A."/>
            <person name="Lyon D."/>
            <person name="Young C."/>
            <person name="Jensen L.J."/>
            <person name="Vertegaal A.C."/>
            <person name="Nielsen M.L."/>
        </authorList>
    </citation>
    <scope>SUMOYLATION [LARGE SCALE ANALYSIS] AT LYS-648 (ISOFORM 3)</scope>
    <scope>IDENTIFICATION BY MASS SPECTROMETRY [LARGE SCALE ANALYSIS]</scope>
</reference>
<sequence length="948" mass="106986">MDRSSKRRQVKPLAASLLEALDYDSSDDSDFKVGDASDSEGSGNGSEDASKDSGEGSCSDSEENILEEELNEDIKVKEEQLKNSAEEEVLSSEKQLIKMEKKEEEENGERPRKKKEKEKEKEKEKEKEKEREKEKEKATVSENVAASAAATTPATSPPAVNTSPSVPTTTTATEEQVSEPKKWNLRRNRPLLDFVSMEELNDMDDYDSEDDNDWRPTVVKRKGRSASQKEGSDGDNEDDEDEGSGSDEDENDEGNDEDHSSPASEGGCKKKKSKVLSRNSADDEELTNDSLTLSQSKSNEDSLILEKSQNWSSQKMDHILICCVCLGDNSEDADEIIQCDNCGITVHEGCYGVDGESDSIMSSASENSTEPWFCDACKCGVSPSCELCPNQDGIFKETDAGRWVHIVCALYVPGVAFGDIDKLRPVTLTEMNYSKYGAKECSFCEDPRFARTGVCISCDAGMCRAYFHVTCAQKEGLLSEAAAEEDIADPFFAYCKQHADRLDRKWKRKNYLALQSYCKMSLQEREKQLSPEAQARINARLQQYRAKAELARSTRPQAWVPREKLPRPLTSSASAIRKLMRKAELMGISTDIFPVDNSDTSSSVDGRRKHKQPALTADFVNYYFERNMRMIQIQENMAEQKNIKDKLENEQEKLHVEYNKLCESLEELQNLNGKLRSEGQGIWALLGRITGQKLNIPAILRAPKERKPSKKEGGTQKTSTLPAVLYSCGICKKNHDQHLLLLCDTCKLHYHLGCLDPPLTRMPRKTKNSYWQCSECDQAGSSDMEADMAMETLPDGTKRSRRQIKEPVKFVPQDVPPEPKKIPIRNTRTRGRKRSFVPEEEKHEERVPRERRQRQSVLQKKPKAEDLRTECATCKGTGDNENLVRCDECRLCYHFGCLDPPLKKSPKQTGYGWICQECDSSSSKEDENEAERKNISQELNMEQKNPKK</sequence>
<accession>O94880</accession>
<accession>A0A0U1RRH6</accession>
<accession>A7MCZ3</accession>
<accession>B4DI82</accession>
<comment type="function">
    <text evidence="1 2 7">Histone-binding protein (PubMed:23688586). Binds preferentially to unmodified histone H3 but can also bind to a lesser extent to histone H3 trimethylated at 'Lys-9' (H3K9me3) as well as to histone H3 monomethylated at 'Lys-27' (H3K27ac) and trimethylated at 'Lys-27' (H3K27me3) (By similarity). Represses PDGFRA expression, thus playing a role in regulation of mesenchymal cell proliferation (By similarity). Suppresses the expression of CDKN1A/p21 by reducing the level of trimethylation of histone H3 'Lys-4', leading to enhanced proliferation of germinal center B cells (By similarity).</text>
</comment>
<comment type="interaction">
    <interactant intactId="EBI-2680164">
        <id>O94880</id>
    </interactant>
    <interactant intactId="EBI-1057516">
        <id>O95239</id>
        <label>KIF4A</label>
    </interactant>
    <organismsDiffer>false</organismsDiffer>
    <experiments>4</experiments>
</comment>
<comment type="interaction">
    <interactant intactId="EBI-16716857">
        <id>O94880-1</id>
    </interactant>
    <interactant intactId="EBI-1057516">
        <id>O95239</id>
        <label>KIF4A</label>
    </interactant>
    <organismsDiffer>false</organismsDiffer>
    <experiments>3</experiments>
</comment>
<comment type="subcellular location">
    <molecule>Isoform 1</molecule>
    <subcellularLocation>
        <location evidence="7">Nucleus</location>
    </subcellularLocation>
    <subcellularLocation>
        <location evidence="7">Chromosome</location>
    </subcellularLocation>
    <text evidence="7">Mainly localized in the nucleus of interphase cells. In mitotic cells, colocalizes with condensed chromatin during metaphase and anaphase.</text>
</comment>
<comment type="subcellular location">
    <molecule>Isoform 2</molecule>
    <subcellularLocation>
        <location evidence="7">Cytoplasm</location>
    </subcellularLocation>
</comment>
<comment type="alternative products">
    <event type="alternative splicing"/>
    <event type="alternative initiation"/>
    <isoform>
        <id>O94880-3</id>
        <name>1</name>
        <name evidence="9">PHF14-alpha</name>
        <sequence type="displayed"/>
    </isoform>
    <isoform>
        <id>O94880-1</id>
        <name>2</name>
        <name evidence="9">PHF14-beta</name>
        <sequence type="described" ref="VSP_061646 VSP_061647"/>
    </isoform>
    <isoform>
        <id>O94880-2</id>
        <name>3</name>
        <name evidence="9">PHF14-gamma</name>
        <sequence type="described" ref="VSP_061645"/>
    </isoform>
</comment>
<comment type="domain">
    <text evidence="1">The N-terminal region, including the PHD-type 1 and 2 zinc fingers and the C2HC pre-PHD-type zinc finger, is required for binding to histone H3.</text>
</comment>
<comment type="miscellaneous">
    <molecule>Isoform 3</molecule>
    <text evidence="10">Dubious isoform. Alternative initiation from a downstream AUG is supported by ribosome profiling data.</text>
</comment>
<comment type="sequence caution" evidence="10">
    <conflict type="erroneous initiation">
        <sequence resource="EMBL-CDS" id="BAA34503"/>
    </conflict>
    <text>Extended N-terminus.</text>
</comment>